<evidence type="ECO:0000255" key="1">
    <source>
        <dbReference type="HAMAP-Rule" id="MF_00093"/>
    </source>
</evidence>
<feature type="chain" id="PRO_1000093468" description="Peptide chain release factor 1">
    <location>
        <begin position="1"/>
        <end position="360"/>
    </location>
</feature>
<feature type="modified residue" description="N5-methylglutamine" evidence="1">
    <location>
        <position position="236"/>
    </location>
</feature>
<protein>
    <recommendedName>
        <fullName evidence="1">Peptide chain release factor 1</fullName>
        <shortName evidence="1">RF-1</shortName>
    </recommendedName>
</protein>
<accession>B2GAT1</accession>
<comment type="function">
    <text evidence="1">Peptide chain release factor 1 directs the termination of translation in response to the peptide chain termination codons UAG and UAA.</text>
</comment>
<comment type="subcellular location">
    <subcellularLocation>
        <location evidence="1">Cytoplasm</location>
    </subcellularLocation>
</comment>
<comment type="PTM">
    <text evidence="1">Methylated by PrmC. Methylation increases the termination efficiency of RF1.</text>
</comment>
<comment type="similarity">
    <text evidence="1">Belongs to the prokaryotic/mitochondrial release factor family.</text>
</comment>
<name>RF1_LIMF3</name>
<organism>
    <name type="scientific">Limosilactobacillus fermentum (strain NBRC 3956 / LMG 18251)</name>
    <name type="common">Lactobacillus fermentum</name>
    <dbReference type="NCBI Taxonomy" id="334390"/>
    <lineage>
        <taxon>Bacteria</taxon>
        <taxon>Bacillati</taxon>
        <taxon>Bacillota</taxon>
        <taxon>Bacilli</taxon>
        <taxon>Lactobacillales</taxon>
        <taxon>Lactobacillaceae</taxon>
        <taxon>Limosilactobacillus</taxon>
    </lineage>
</organism>
<gene>
    <name evidence="1" type="primary">prfA</name>
    <name type="ordered locus">LAF_0427</name>
</gene>
<reference key="1">
    <citation type="journal article" date="2008" name="DNA Res.">
        <title>Comparative genome analysis of Lactobacillus reuteri and Lactobacillus fermentum reveal a genomic island for reuterin and cobalamin production.</title>
        <authorList>
            <person name="Morita H."/>
            <person name="Toh H."/>
            <person name="Fukuda S."/>
            <person name="Horikawa H."/>
            <person name="Oshima K."/>
            <person name="Suzuki T."/>
            <person name="Murakami M."/>
            <person name="Hisamatsu S."/>
            <person name="Kato Y."/>
            <person name="Takizawa T."/>
            <person name="Fukuoka H."/>
            <person name="Yoshimura T."/>
            <person name="Itoh K."/>
            <person name="O'Sullivan D.J."/>
            <person name="McKay L.L."/>
            <person name="Ohno H."/>
            <person name="Kikuchi J."/>
            <person name="Masaoka T."/>
            <person name="Hattori M."/>
        </authorList>
    </citation>
    <scope>NUCLEOTIDE SEQUENCE [LARGE SCALE GENOMIC DNA]</scope>
    <source>
        <strain>NBRC 3956 / LMG 18251</strain>
    </source>
</reference>
<dbReference type="EMBL" id="AP008937">
    <property type="protein sequence ID" value="BAG26763.1"/>
    <property type="molecule type" value="Genomic_DNA"/>
</dbReference>
<dbReference type="SMR" id="B2GAT1"/>
<dbReference type="KEGG" id="lfe:LAF_0427"/>
<dbReference type="eggNOG" id="COG0216">
    <property type="taxonomic scope" value="Bacteria"/>
</dbReference>
<dbReference type="HOGENOM" id="CLU_036856_0_1_9"/>
<dbReference type="Proteomes" id="UP000001697">
    <property type="component" value="Chromosome"/>
</dbReference>
<dbReference type="GO" id="GO:0005737">
    <property type="term" value="C:cytoplasm"/>
    <property type="evidence" value="ECO:0007669"/>
    <property type="project" value="UniProtKB-SubCell"/>
</dbReference>
<dbReference type="GO" id="GO:0016149">
    <property type="term" value="F:translation release factor activity, codon specific"/>
    <property type="evidence" value="ECO:0007669"/>
    <property type="project" value="UniProtKB-UniRule"/>
</dbReference>
<dbReference type="FunFam" id="3.30.160.20:FF:000004">
    <property type="entry name" value="Peptide chain release factor 1"/>
    <property type="match status" value="1"/>
</dbReference>
<dbReference type="FunFam" id="3.30.70.1660:FF:000002">
    <property type="entry name" value="Peptide chain release factor 1"/>
    <property type="match status" value="1"/>
</dbReference>
<dbReference type="FunFam" id="3.30.70.1660:FF:000004">
    <property type="entry name" value="Peptide chain release factor 1"/>
    <property type="match status" value="1"/>
</dbReference>
<dbReference type="Gene3D" id="3.30.160.20">
    <property type="match status" value="1"/>
</dbReference>
<dbReference type="Gene3D" id="3.30.70.1660">
    <property type="match status" value="1"/>
</dbReference>
<dbReference type="Gene3D" id="6.10.140.1950">
    <property type="match status" value="1"/>
</dbReference>
<dbReference type="HAMAP" id="MF_00093">
    <property type="entry name" value="Rel_fac_1"/>
    <property type="match status" value="1"/>
</dbReference>
<dbReference type="InterPro" id="IPR005139">
    <property type="entry name" value="PCRF"/>
</dbReference>
<dbReference type="InterPro" id="IPR000352">
    <property type="entry name" value="Pep_chain_release_fac_I"/>
</dbReference>
<dbReference type="InterPro" id="IPR045853">
    <property type="entry name" value="Pep_chain_release_fac_I_sf"/>
</dbReference>
<dbReference type="InterPro" id="IPR050057">
    <property type="entry name" value="Prokaryotic/Mito_RF"/>
</dbReference>
<dbReference type="InterPro" id="IPR004373">
    <property type="entry name" value="RF-1"/>
</dbReference>
<dbReference type="NCBIfam" id="TIGR00019">
    <property type="entry name" value="prfA"/>
    <property type="match status" value="1"/>
</dbReference>
<dbReference type="NCBIfam" id="NF001859">
    <property type="entry name" value="PRK00591.1"/>
    <property type="match status" value="1"/>
</dbReference>
<dbReference type="PANTHER" id="PTHR43804">
    <property type="entry name" value="LD18447P"/>
    <property type="match status" value="1"/>
</dbReference>
<dbReference type="PANTHER" id="PTHR43804:SF7">
    <property type="entry name" value="LD18447P"/>
    <property type="match status" value="1"/>
</dbReference>
<dbReference type="Pfam" id="PF03462">
    <property type="entry name" value="PCRF"/>
    <property type="match status" value="1"/>
</dbReference>
<dbReference type="Pfam" id="PF00472">
    <property type="entry name" value="RF-1"/>
    <property type="match status" value="1"/>
</dbReference>
<dbReference type="SMART" id="SM00937">
    <property type="entry name" value="PCRF"/>
    <property type="match status" value="1"/>
</dbReference>
<dbReference type="SUPFAM" id="SSF75620">
    <property type="entry name" value="Release factor"/>
    <property type="match status" value="1"/>
</dbReference>
<dbReference type="PROSITE" id="PS00745">
    <property type="entry name" value="RF_PROK_I"/>
    <property type="match status" value="1"/>
</dbReference>
<sequence length="360" mass="41069">MEEIFDKLQAVADRYDELNELISDPEVIADSQRFMKLSKEEGSLRETVEKYNEYKEVTQTIKDDTEMLREESDPDLVEMTKEELNEAKERQAQLQDELEVLLIPKDPNDDKNIIMEIRGAAGGDEASLFAADLYNMYVRYAEKQGWNVEVVDRNETEVGGFKEIALIITGDQVYSKLKFENGAHRVQRIPATESAGRVHTSTATVGVMPEAEDVDVDLDPKDIRVDVYRSSGAGGQHINKTSSAVRMTHLPTGIVVAMQDERSQQQNRAKAMQILKARVYDYYQQQEQSEYDAQRKNAIGTGDRSERIRTYNYPQNRVTDHRIGLTLNKLDKIMAGDLEEIIESLIIADQAQKLEQLRNE</sequence>
<keyword id="KW-0963">Cytoplasm</keyword>
<keyword id="KW-0488">Methylation</keyword>
<keyword id="KW-0648">Protein biosynthesis</keyword>
<keyword id="KW-1185">Reference proteome</keyword>
<proteinExistence type="inferred from homology"/>